<accession>Q3MEV7</accession>
<evidence type="ECO:0000255" key="1">
    <source>
        <dbReference type="HAMAP-Rule" id="MF_01024"/>
    </source>
</evidence>
<organism>
    <name type="scientific">Trichormus variabilis (strain ATCC 29413 / PCC 7937)</name>
    <name type="common">Anabaena variabilis</name>
    <dbReference type="NCBI Taxonomy" id="240292"/>
    <lineage>
        <taxon>Bacteria</taxon>
        <taxon>Bacillati</taxon>
        <taxon>Cyanobacteriota</taxon>
        <taxon>Cyanophyceae</taxon>
        <taxon>Nostocales</taxon>
        <taxon>Nostocaceae</taxon>
        <taxon>Trichormus</taxon>
    </lineage>
</organism>
<protein>
    <recommendedName>
        <fullName evidence="1">Histidinol dehydrogenase 1</fullName>
        <shortName evidence="1">HDH 1</shortName>
        <ecNumber evidence="1">1.1.1.23</ecNumber>
    </recommendedName>
</protein>
<name>HISX1_TRIV2</name>
<feature type="chain" id="PRO_0000229848" description="Histidinol dehydrogenase 1">
    <location>
        <begin position="1"/>
        <end position="431"/>
    </location>
</feature>
<feature type="active site" description="Proton acceptor" evidence="1">
    <location>
        <position position="324"/>
    </location>
</feature>
<feature type="active site" description="Proton acceptor" evidence="1">
    <location>
        <position position="325"/>
    </location>
</feature>
<feature type="binding site" evidence="1">
    <location>
        <position position="127"/>
    </location>
    <ligand>
        <name>NAD(+)</name>
        <dbReference type="ChEBI" id="CHEBI:57540"/>
    </ligand>
</feature>
<feature type="binding site" evidence="1">
    <location>
        <position position="188"/>
    </location>
    <ligand>
        <name>NAD(+)</name>
        <dbReference type="ChEBI" id="CHEBI:57540"/>
    </ligand>
</feature>
<feature type="binding site" evidence="1">
    <location>
        <position position="211"/>
    </location>
    <ligand>
        <name>NAD(+)</name>
        <dbReference type="ChEBI" id="CHEBI:57540"/>
    </ligand>
</feature>
<feature type="binding site" evidence="1">
    <location>
        <position position="234"/>
    </location>
    <ligand>
        <name>substrate</name>
    </ligand>
</feature>
<feature type="binding site" evidence="1">
    <location>
        <position position="256"/>
    </location>
    <ligand>
        <name>substrate</name>
    </ligand>
</feature>
<feature type="binding site" evidence="1">
    <location>
        <position position="256"/>
    </location>
    <ligand>
        <name>Zn(2+)</name>
        <dbReference type="ChEBI" id="CHEBI:29105"/>
    </ligand>
</feature>
<feature type="binding site" evidence="1">
    <location>
        <position position="259"/>
    </location>
    <ligand>
        <name>substrate</name>
    </ligand>
</feature>
<feature type="binding site" evidence="1">
    <location>
        <position position="259"/>
    </location>
    <ligand>
        <name>Zn(2+)</name>
        <dbReference type="ChEBI" id="CHEBI:29105"/>
    </ligand>
</feature>
<feature type="binding site" evidence="1">
    <location>
        <position position="325"/>
    </location>
    <ligand>
        <name>substrate</name>
    </ligand>
</feature>
<feature type="binding site" evidence="1">
    <location>
        <position position="358"/>
    </location>
    <ligand>
        <name>substrate</name>
    </ligand>
</feature>
<feature type="binding site" evidence="1">
    <location>
        <position position="358"/>
    </location>
    <ligand>
        <name>Zn(2+)</name>
        <dbReference type="ChEBI" id="CHEBI:29105"/>
    </ligand>
</feature>
<feature type="binding site" evidence="1">
    <location>
        <position position="412"/>
    </location>
    <ligand>
        <name>substrate</name>
    </ligand>
</feature>
<feature type="binding site" evidence="1">
    <location>
        <position position="417"/>
    </location>
    <ligand>
        <name>substrate</name>
    </ligand>
</feature>
<feature type="binding site" evidence="1">
    <location>
        <position position="417"/>
    </location>
    <ligand>
        <name>Zn(2+)</name>
        <dbReference type="ChEBI" id="CHEBI:29105"/>
    </ligand>
</feature>
<comment type="function">
    <text evidence="1">Catalyzes the sequential NAD-dependent oxidations of L-histidinol to L-histidinaldehyde and then to L-histidine.</text>
</comment>
<comment type="catalytic activity">
    <reaction evidence="1">
        <text>L-histidinol + 2 NAD(+) + H2O = L-histidine + 2 NADH + 3 H(+)</text>
        <dbReference type="Rhea" id="RHEA:20641"/>
        <dbReference type="ChEBI" id="CHEBI:15377"/>
        <dbReference type="ChEBI" id="CHEBI:15378"/>
        <dbReference type="ChEBI" id="CHEBI:57540"/>
        <dbReference type="ChEBI" id="CHEBI:57595"/>
        <dbReference type="ChEBI" id="CHEBI:57699"/>
        <dbReference type="ChEBI" id="CHEBI:57945"/>
        <dbReference type="EC" id="1.1.1.23"/>
    </reaction>
</comment>
<comment type="cofactor">
    <cofactor evidence="1">
        <name>Zn(2+)</name>
        <dbReference type="ChEBI" id="CHEBI:29105"/>
    </cofactor>
    <text evidence="1">Binds 1 zinc ion per subunit.</text>
</comment>
<comment type="pathway">
    <text evidence="1">Amino-acid biosynthesis; L-histidine biosynthesis; L-histidine from 5-phospho-alpha-D-ribose 1-diphosphate: step 9/9.</text>
</comment>
<comment type="similarity">
    <text evidence="1">Belongs to the histidinol dehydrogenase family.</text>
</comment>
<proteinExistence type="inferred from homology"/>
<sequence length="431" mass="45806">MLVLKTTDQEFSTRFQSLVSDRREATVDVSGTVRDILAHVKAHGDAAVQEYTSRFDHYSPHSHHLSAAFIAEQAAKCSAEVKAAIELAAERISSFHQKQLPQDIGYTDTVGVKLGLNWVALSQVGIYVPGGRASYPSSVLMNALPAKIAGVERIVMTVPMPHGEINPAVLAAAQVAGVTEIYSIGGAQAVGALAYGTETITPVDKIVGPGNAYVAEAKRQVFGTVGIDSIAGPSEILVVADRQNNPEWIAWDLLSQAEHDPSAQSILITDSESFAQQVIGAVEQILTTLPTTKVASSSWQNHGAVIIVRDLAESIPLLNQLAPEHVELCVDNPQLLASQIKCAGSLFLGRYTPEAIGDYLGGPNHVLPTSRSARFASGLSVYDFLKRITYLECNQAALQAIGQSAVTLAETEGLPAHAGSVAVRLQGLNDM</sequence>
<reference key="1">
    <citation type="journal article" date="2014" name="Stand. Genomic Sci.">
        <title>Complete genome sequence of Anabaena variabilis ATCC 29413.</title>
        <authorList>
            <person name="Thiel T."/>
            <person name="Pratte B.S."/>
            <person name="Zhong J."/>
            <person name="Goodwin L."/>
            <person name="Copeland A."/>
            <person name="Lucas S."/>
            <person name="Han C."/>
            <person name="Pitluck S."/>
            <person name="Land M.L."/>
            <person name="Kyrpides N.C."/>
            <person name="Woyke T."/>
        </authorList>
    </citation>
    <scope>NUCLEOTIDE SEQUENCE [LARGE SCALE GENOMIC DNA]</scope>
    <source>
        <strain>ATCC 29413 / PCC 7937</strain>
    </source>
</reference>
<keyword id="KW-0028">Amino-acid biosynthesis</keyword>
<keyword id="KW-0368">Histidine biosynthesis</keyword>
<keyword id="KW-0479">Metal-binding</keyword>
<keyword id="KW-0520">NAD</keyword>
<keyword id="KW-0560">Oxidoreductase</keyword>
<keyword id="KW-0862">Zinc</keyword>
<gene>
    <name evidence="1" type="primary">hisD1</name>
    <name type="ordered locus">Ava_0855</name>
</gene>
<dbReference type="EC" id="1.1.1.23" evidence="1"/>
<dbReference type="EMBL" id="CP000117">
    <property type="protein sequence ID" value="ABA20479.1"/>
    <property type="molecule type" value="Genomic_DNA"/>
</dbReference>
<dbReference type="SMR" id="Q3MEV7"/>
<dbReference type="STRING" id="240292.Ava_0855"/>
<dbReference type="KEGG" id="ava:Ava_0855"/>
<dbReference type="eggNOG" id="COG0141">
    <property type="taxonomic scope" value="Bacteria"/>
</dbReference>
<dbReference type="HOGENOM" id="CLU_006732_3_3_3"/>
<dbReference type="UniPathway" id="UPA00031">
    <property type="reaction ID" value="UER00014"/>
</dbReference>
<dbReference type="Proteomes" id="UP000002533">
    <property type="component" value="Chromosome"/>
</dbReference>
<dbReference type="GO" id="GO:0005829">
    <property type="term" value="C:cytosol"/>
    <property type="evidence" value="ECO:0007669"/>
    <property type="project" value="TreeGrafter"/>
</dbReference>
<dbReference type="GO" id="GO:0004399">
    <property type="term" value="F:histidinol dehydrogenase activity"/>
    <property type="evidence" value="ECO:0007669"/>
    <property type="project" value="UniProtKB-UniRule"/>
</dbReference>
<dbReference type="GO" id="GO:0051287">
    <property type="term" value="F:NAD binding"/>
    <property type="evidence" value="ECO:0007669"/>
    <property type="project" value="InterPro"/>
</dbReference>
<dbReference type="GO" id="GO:0008270">
    <property type="term" value="F:zinc ion binding"/>
    <property type="evidence" value="ECO:0007669"/>
    <property type="project" value="UniProtKB-UniRule"/>
</dbReference>
<dbReference type="GO" id="GO:0000105">
    <property type="term" value="P:L-histidine biosynthetic process"/>
    <property type="evidence" value="ECO:0007669"/>
    <property type="project" value="UniProtKB-UniRule"/>
</dbReference>
<dbReference type="CDD" id="cd06572">
    <property type="entry name" value="Histidinol_dh"/>
    <property type="match status" value="1"/>
</dbReference>
<dbReference type="FunFam" id="3.40.50.1980:FF:000001">
    <property type="entry name" value="Histidinol dehydrogenase"/>
    <property type="match status" value="1"/>
</dbReference>
<dbReference type="FunFam" id="3.40.50.1980:FF:000026">
    <property type="entry name" value="Histidinol dehydrogenase"/>
    <property type="match status" value="1"/>
</dbReference>
<dbReference type="Gene3D" id="1.20.5.1300">
    <property type="match status" value="1"/>
</dbReference>
<dbReference type="Gene3D" id="3.40.50.1980">
    <property type="entry name" value="Nitrogenase molybdenum iron protein domain"/>
    <property type="match status" value="2"/>
</dbReference>
<dbReference type="HAMAP" id="MF_01024">
    <property type="entry name" value="HisD"/>
    <property type="match status" value="1"/>
</dbReference>
<dbReference type="InterPro" id="IPR016161">
    <property type="entry name" value="Ald_DH/histidinol_DH"/>
</dbReference>
<dbReference type="InterPro" id="IPR001692">
    <property type="entry name" value="Histidinol_DH_CS"/>
</dbReference>
<dbReference type="InterPro" id="IPR022695">
    <property type="entry name" value="Histidinol_DH_monofunct"/>
</dbReference>
<dbReference type="InterPro" id="IPR012131">
    <property type="entry name" value="Hstdl_DH"/>
</dbReference>
<dbReference type="NCBIfam" id="TIGR00069">
    <property type="entry name" value="hisD"/>
    <property type="match status" value="1"/>
</dbReference>
<dbReference type="PANTHER" id="PTHR21256:SF2">
    <property type="entry name" value="HISTIDINE BIOSYNTHESIS TRIFUNCTIONAL PROTEIN"/>
    <property type="match status" value="1"/>
</dbReference>
<dbReference type="PANTHER" id="PTHR21256">
    <property type="entry name" value="HISTIDINOL DEHYDROGENASE HDH"/>
    <property type="match status" value="1"/>
</dbReference>
<dbReference type="Pfam" id="PF00815">
    <property type="entry name" value="Histidinol_dh"/>
    <property type="match status" value="1"/>
</dbReference>
<dbReference type="PIRSF" id="PIRSF000099">
    <property type="entry name" value="Histidinol_dh"/>
    <property type="match status" value="1"/>
</dbReference>
<dbReference type="PRINTS" id="PR00083">
    <property type="entry name" value="HOLDHDRGNASE"/>
</dbReference>
<dbReference type="SUPFAM" id="SSF53720">
    <property type="entry name" value="ALDH-like"/>
    <property type="match status" value="1"/>
</dbReference>
<dbReference type="PROSITE" id="PS00611">
    <property type="entry name" value="HISOL_DEHYDROGENASE"/>
    <property type="match status" value="1"/>
</dbReference>